<feature type="chain" id="PRO_0000140988" description="Thymidylate synthase">
    <location>
        <begin position="1"/>
        <end position="286"/>
    </location>
</feature>
<feature type="active site" description="Nucleophile" evidence="1">
    <location>
        <position position="170"/>
    </location>
</feature>
<feature type="binding site" description="in other chain" evidence="1">
    <location>
        <position position="21"/>
    </location>
    <ligand>
        <name>dUMP</name>
        <dbReference type="ChEBI" id="CHEBI:246422"/>
        <note>ligand shared between dimeric partners</note>
    </ligand>
</feature>
<feature type="binding site" evidence="1">
    <location>
        <position position="51"/>
    </location>
    <ligand>
        <name>(6R)-5,10-methylene-5,6,7,8-tetrahydrofolate</name>
        <dbReference type="ChEBI" id="CHEBI:15636"/>
    </ligand>
</feature>
<feature type="binding site" evidence="1">
    <location>
        <begin position="150"/>
        <end position="151"/>
    </location>
    <ligand>
        <name>dUMP</name>
        <dbReference type="ChEBI" id="CHEBI:246422"/>
        <note>ligand shared between dimeric partners</note>
    </ligand>
</feature>
<feature type="binding site" description="in other chain" evidence="1">
    <location>
        <begin position="190"/>
        <end position="193"/>
    </location>
    <ligand>
        <name>dUMP</name>
        <dbReference type="ChEBI" id="CHEBI:246422"/>
        <note>ligand shared between dimeric partners</note>
    </ligand>
</feature>
<feature type="binding site" evidence="1">
    <location>
        <position position="193"/>
    </location>
    <ligand>
        <name>(6R)-5,10-methylene-5,6,7,8-tetrahydrofolate</name>
        <dbReference type="ChEBI" id="CHEBI:15636"/>
    </ligand>
</feature>
<feature type="binding site" description="in other chain" evidence="1">
    <location>
        <position position="201"/>
    </location>
    <ligand>
        <name>dUMP</name>
        <dbReference type="ChEBI" id="CHEBI:246422"/>
        <note>ligand shared between dimeric partners</note>
    </ligand>
</feature>
<feature type="binding site" description="in other chain" evidence="1">
    <location>
        <begin position="231"/>
        <end position="233"/>
    </location>
    <ligand>
        <name>dUMP</name>
        <dbReference type="ChEBI" id="CHEBI:246422"/>
        <note>ligand shared between dimeric partners</note>
    </ligand>
</feature>
<feature type="binding site" evidence="1">
    <location>
        <position position="285"/>
    </location>
    <ligand>
        <name>(6R)-5,10-methylene-5,6,7,8-tetrahydrofolate</name>
        <dbReference type="ChEBI" id="CHEBI:15636"/>
    </ligand>
</feature>
<protein>
    <recommendedName>
        <fullName evidence="1">Thymidylate synthase</fullName>
        <shortName evidence="1">TS</shortName>
        <shortName evidence="1">TSase</shortName>
        <ecNumber evidence="1">2.1.1.45</ecNumber>
    </recommendedName>
</protein>
<reference key="1">
    <citation type="journal article" date="2001" name="Nucleic Acids Res.">
        <title>The complete genome sequence of the murine respiratory pathogen Mycoplasma pulmonis.</title>
        <authorList>
            <person name="Chambaud I."/>
            <person name="Heilig R."/>
            <person name="Ferris S."/>
            <person name="Barbe V."/>
            <person name="Samson D."/>
            <person name="Galisson F."/>
            <person name="Moszer I."/>
            <person name="Dybvig K."/>
            <person name="Wroblewski H."/>
            <person name="Viari A."/>
            <person name="Rocha E.P.C."/>
            <person name="Blanchard A."/>
        </authorList>
    </citation>
    <scope>NUCLEOTIDE SEQUENCE [LARGE SCALE GENOMIC DNA]</scope>
    <source>
        <strain>UAB CTIP</strain>
    </source>
</reference>
<proteinExistence type="inferred from homology"/>
<keyword id="KW-0963">Cytoplasm</keyword>
<keyword id="KW-0489">Methyltransferase</keyword>
<keyword id="KW-0545">Nucleotide biosynthesis</keyword>
<keyword id="KW-1185">Reference proteome</keyword>
<keyword id="KW-0808">Transferase</keyword>
<gene>
    <name evidence="1" type="primary">thyA</name>
    <name type="ordered locus">MYPU_5380</name>
</gene>
<comment type="function">
    <text evidence="1">Catalyzes the reductive methylation of 2'-deoxyuridine-5'-monophosphate (dUMP) to 2'-deoxythymidine-5'-monophosphate (dTMP) while utilizing 5,10-methylenetetrahydrofolate (mTHF) as the methyl donor and reductant in the reaction, yielding dihydrofolate (DHF) as a by-product. This enzymatic reaction provides an intracellular de novo source of dTMP, an essential precursor for DNA biosynthesis.</text>
</comment>
<comment type="catalytic activity">
    <reaction evidence="1">
        <text>dUMP + (6R)-5,10-methylene-5,6,7,8-tetrahydrofolate = 7,8-dihydrofolate + dTMP</text>
        <dbReference type="Rhea" id="RHEA:12104"/>
        <dbReference type="ChEBI" id="CHEBI:15636"/>
        <dbReference type="ChEBI" id="CHEBI:57451"/>
        <dbReference type="ChEBI" id="CHEBI:63528"/>
        <dbReference type="ChEBI" id="CHEBI:246422"/>
        <dbReference type="EC" id="2.1.1.45"/>
    </reaction>
</comment>
<comment type="pathway">
    <text evidence="1">Pyrimidine metabolism; dTTP biosynthesis.</text>
</comment>
<comment type="subunit">
    <text evidence="1">Homodimer.</text>
</comment>
<comment type="subcellular location">
    <subcellularLocation>
        <location evidence="1">Cytoplasm</location>
    </subcellularLocation>
</comment>
<comment type="similarity">
    <text evidence="1">Belongs to the thymidylate synthase family. Bacterial-type ThyA subfamily.</text>
</comment>
<evidence type="ECO:0000255" key="1">
    <source>
        <dbReference type="HAMAP-Rule" id="MF_00008"/>
    </source>
</evidence>
<organism>
    <name type="scientific">Mycoplasmopsis pulmonis (strain UAB CTIP)</name>
    <name type="common">Mycoplasma pulmonis</name>
    <dbReference type="NCBI Taxonomy" id="272635"/>
    <lineage>
        <taxon>Bacteria</taxon>
        <taxon>Bacillati</taxon>
        <taxon>Mycoplasmatota</taxon>
        <taxon>Mycoplasmoidales</taxon>
        <taxon>Metamycoplasmataceae</taxon>
        <taxon>Mycoplasmopsis</taxon>
    </lineage>
</organism>
<name>TYSY_MYCPU</name>
<dbReference type="EC" id="2.1.1.45" evidence="1"/>
<dbReference type="EMBL" id="AL445565">
    <property type="protein sequence ID" value="CAC13711.1"/>
    <property type="molecule type" value="Genomic_DNA"/>
</dbReference>
<dbReference type="PIR" id="B90579">
    <property type="entry name" value="B90579"/>
</dbReference>
<dbReference type="RefSeq" id="WP_010925339.1">
    <property type="nucleotide sequence ID" value="NC_002771.1"/>
</dbReference>
<dbReference type="SMR" id="Q98Q31"/>
<dbReference type="STRING" id="272635.gene:17577140"/>
<dbReference type="KEGG" id="mpu:MYPU_5380"/>
<dbReference type="eggNOG" id="COG0207">
    <property type="taxonomic scope" value="Bacteria"/>
</dbReference>
<dbReference type="HOGENOM" id="CLU_021669_0_0_14"/>
<dbReference type="BioCyc" id="MPUL272635:G1GT6-546-MONOMER"/>
<dbReference type="UniPathway" id="UPA00575"/>
<dbReference type="Proteomes" id="UP000000528">
    <property type="component" value="Chromosome"/>
</dbReference>
<dbReference type="GO" id="GO:0005829">
    <property type="term" value="C:cytosol"/>
    <property type="evidence" value="ECO:0007669"/>
    <property type="project" value="TreeGrafter"/>
</dbReference>
<dbReference type="GO" id="GO:0004799">
    <property type="term" value="F:thymidylate synthase activity"/>
    <property type="evidence" value="ECO:0007669"/>
    <property type="project" value="UniProtKB-UniRule"/>
</dbReference>
<dbReference type="GO" id="GO:0006231">
    <property type="term" value="P:dTMP biosynthetic process"/>
    <property type="evidence" value="ECO:0007669"/>
    <property type="project" value="UniProtKB-UniRule"/>
</dbReference>
<dbReference type="GO" id="GO:0006235">
    <property type="term" value="P:dTTP biosynthetic process"/>
    <property type="evidence" value="ECO:0007669"/>
    <property type="project" value="UniProtKB-UniRule"/>
</dbReference>
<dbReference type="GO" id="GO:0032259">
    <property type="term" value="P:methylation"/>
    <property type="evidence" value="ECO:0007669"/>
    <property type="project" value="UniProtKB-KW"/>
</dbReference>
<dbReference type="CDD" id="cd00351">
    <property type="entry name" value="TS_Pyrimidine_HMase"/>
    <property type="match status" value="1"/>
</dbReference>
<dbReference type="Gene3D" id="3.30.572.10">
    <property type="entry name" value="Thymidylate synthase/dCMP hydroxymethylase domain"/>
    <property type="match status" value="1"/>
</dbReference>
<dbReference type="HAMAP" id="MF_00008">
    <property type="entry name" value="Thymidy_synth_bact"/>
    <property type="match status" value="1"/>
</dbReference>
<dbReference type="InterPro" id="IPR045097">
    <property type="entry name" value="Thymidate_synth/dCMP_Mease"/>
</dbReference>
<dbReference type="InterPro" id="IPR023451">
    <property type="entry name" value="Thymidate_synth/dCMP_Mease_dom"/>
</dbReference>
<dbReference type="InterPro" id="IPR036926">
    <property type="entry name" value="Thymidate_synth/dCMP_Mease_sf"/>
</dbReference>
<dbReference type="InterPro" id="IPR000398">
    <property type="entry name" value="Thymidylate_synthase"/>
</dbReference>
<dbReference type="InterPro" id="IPR020940">
    <property type="entry name" value="Thymidylate_synthase_AS"/>
</dbReference>
<dbReference type="NCBIfam" id="NF002496">
    <property type="entry name" value="PRK01827.1-2"/>
    <property type="match status" value="1"/>
</dbReference>
<dbReference type="NCBIfam" id="TIGR03284">
    <property type="entry name" value="thym_sym"/>
    <property type="match status" value="1"/>
</dbReference>
<dbReference type="PANTHER" id="PTHR11548:SF9">
    <property type="entry name" value="THYMIDYLATE SYNTHASE"/>
    <property type="match status" value="1"/>
</dbReference>
<dbReference type="PANTHER" id="PTHR11548">
    <property type="entry name" value="THYMIDYLATE SYNTHASE 1"/>
    <property type="match status" value="1"/>
</dbReference>
<dbReference type="Pfam" id="PF00303">
    <property type="entry name" value="Thymidylat_synt"/>
    <property type="match status" value="1"/>
</dbReference>
<dbReference type="PRINTS" id="PR00108">
    <property type="entry name" value="THYMDSNTHASE"/>
</dbReference>
<dbReference type="SUPFAM" id="SSF55831">
    <property type="entry name" value="Thymidylate synthase/dCMP hydroxymethylase"/>
    <property type="match status" value="1"/>
</dbReference>
<dbReference type="PROSITE" id="PS00091">
    <property type="entry name" value="THYMIDYLATE_SYNTHASE"/>
    <property type="match status" value="1"/>
</dbReference>
<accession>Q98Q31</accession>
<sequence length="286" mass="33458">MKQYLDFLKWVLEKGKHKENRTSVDTISAFGYQMRFDLSKGFPLVTTKKTNFSAIAHELLWFIKGDTNIKYLVDNKVNIWNQWPYESYKKSQDFQSESLKEFIQKIKDDNEFAQKHGNLGPVYGKQWRDFLGIDQLKKVIEQIKNNPNSRRLIVSSWNPSEIDTMLLPPCHTLFQFYVNDNKLSCHLYQRSADAFLGIPFNIASYALLTFLLAQETNLEVGDFVHSIGDAHIYVNHLEQVKTQLKRNPKELPKLIIKNKNIFEINFEDIELVDYEFDPIIKGEVAV</sequence>